<feature type="chain" id="PRO_0000312619" description="L-arabinose isomerase">
    <location>
        <begin position="1"/>
        <end position="500"/>
    </location>
</feature>
<feature type="binding site" evidence="1">
    <location>
        <position position="306"/>
    </location>
    <ligand>
        <name>Mn(2+)</name>
        <dbReference type="ChEBI" id="CHEBI:29035"/>
    </ligand>
</feature>
<feature type="binding site" evidence="1">
    <location>
        <position position="333"/>
    </location>
    <ligand>
        <name>Mn(2+)</name>
        <dbReference type="ChEBI" id="CHEBI:29035"/>
    </ligand>
</feature>
<feature type="binding site" evidence="1">
    <location>
        <position position="349"/>
    </location>
    <ligand>
        <name>Mn(2+)</name>
        <dbReference type="ChEBI" id="CHEBI:29035"/>
    </ligand>
</feature>
<feature type="binding site" evidence="1">
    <location>
        <position position="448"/>
    </location>
    <ligand>
        <name>Mn(2+)</name>
        <dbReference type="ChEBI" id="CHEBI:29035"/>
    </ligand>
</feature>
<proteinExistence type="inferred from homology"/>
<evidence type="ECO:0000255" key="1">
    <source>
        <dbReference type="HAMAP-Rule" id="MF_00519"/>
    </source>
</evidence>
<name>ARAA_SHESR</name>
<sequence>MKAFKQKQVWFITGSQDLYGPKVLEQVAKNSEQIVHGFNESSAISIEVVYKPTVKSPREIHAVCQAANSDENCVGVILWMHTFSPAKMWIAGLNELSKPFMHLHTQFNAELPWSEINMNYMNTHQSAHGCREFGFIGTRMRKERKVVVGHWQSSDVQAQIDDWCRAAAGWHESQNLRIARFGDNMRQVAVTEGDKVAAQIQFGYEVHAYSLGELNEAIAAIAEGDVTAQLDRYASEYQVGNELFGDEYQLDRLRKEAKIELGLTQFLTQGGFGAFTNCFENLTGMTGLPGLATQRLMANGFGYGGEGDWKTAAMVRIMKVMGQGRAGGTSFMEDYTYNFGATDQVLGAHMLEVCPSIAAAKPRLEVHRHTIGVRCDVPRLLFTGKAGPAINVSTIDLGNRFRIILNELDTVTPPQDLPNLPVASALWEPRPNLAVAAAAWIHAGGAHHSAYSQAITTDQIVDFAEMAGAELVIIDADTKIREFKNELRQNSVYYGLARGL</sequence>
<keyword id="KW-0054">Arabinose catabolism</keyword>
<keyword id="KW-0119">Carbohydrate metabolism</keyword>
<keyword id="KW-0413">Isomerase</keyword>
<keyword id="KW-0464">Manganese</keyword>
<keyword id="KW-0479">Metal-binding</keyword>
<dbReference type="EC" id="5.3.1.4" evidence="1"/>
<dbReference type="EMBL" id="CP000444">
    <property type="protein sequence ID" value="ABI42984.1"/>
    <property type="molecule type" value="Genomic_DNA"/>
</dbReference>
<dbReference type="RefSeq" id="WP_011626172.1">
    <property type="nucleotide sequence ID" value="NZ_CP080412.1"/>
</dbReference>
<dbReference type="SMR" id="Q0HV71"/>
<dbReference type="GeneID" id="94728010"/>
<dbReference type="KEGG" id="shm:Shewmr7_1995"/>
<dbReference type="HOGENOM" id="CLU_045663_0_0_6"/>
<dbReference type="UniPathway" id="UPA00145">
    <property type="reaction ID" value="UER00565"/>
</dbReference>
<dbReference type="GO" id="GO:0005829">
    <property type="term" value="C:cytosol"/>
    <property type="evidence" value="ECO:0007669"/>
    <property type="project" value="TreeGrafter"/>
</dbReference>
<dbReference type="GO" id="GO:0008733">
    <property type="term" value="F:L-arabinose isomerase activity"/>
    <property type="evidence" value="ECO:0007669"/>
    <property type="project" value="UniProtKB-UniRule"/>
</dbReference>
<dbReference type="GO" id="GO:0030145">
    <property type="term" value="F:manganese ion binding"/>
    <property type="evidence" value="ECO:0007669"/>
    <property type="project" value="UniProtKB-UniRule"/>
</dbReference>
<dbReference type="GO" id="GO:0019569">
    <property type="term" value="P:L-arabinose catabolic process to xylulose 5-phosphate"/>
    <property type="evidence" value="ECO:0007669"/>
    <property type="project" value="UniProtKB-UniRule"/>
</dbReference>
<dbReference type="CDD" id="cd03557">
    <property type="entry name" value="L-arabinose_isomerase"/>
    <property type="match status" value="1"/>
</dbReference>
<dbReference type="Gene3D" id="3.40.50.10940">
    <property type="match status" value="1"/>
</dbReference>
<dbReference type="HAMAP" id="MF_00519">
    <property type="entry name" value="Arabinose_Isome"/>
    <property type="match status" value="1"/>
</dbReference>
<dbReference type="InterPro" id="IPR024664">
    <property type="entry name" value="Ara_Isoase_C"/>
</dbReference>
<dbReference type="InterPro" id="IPR055390">
    <property type="entry name" value="AraA_central"/>
</dbReference>
<dbReference type="InterPro" id="IPR055389">
    <property type="entry name" value="AraA_N"/>
</dbReference>
<dbReference type="InterPro" id="IPR038583">
    <property type="entry name" value="AraA_N_sf"/>
</dbReference>
<dbReference type="InterPro" id="IPR004216">
    <property type="entry name" value="Fuc/Ara_isomerase_C"/>
</dbReference>
<dbReference type="InterPro" id="IPR009015">
    <property type="entry name" value="Fucose_isomerase_N/cen_sf"/>
</dbReference>
<dbReference type="InterPro" id="IPR003762">
    <property type="entry name" value="Lara_isomerase"/>
</dbReference>
<dbReference type="NCBIfam" id="NF002795">
    <property type="entry name" value="PRK02929.1"/>
    <property type="match status" value="1"/>
</dbReference>
<dbReference type="PANTHER" id="PTHR38464">
    <property type="entry name" value="L-ARABINOSE ISOMERASE"/>
    <property type="match status" value="1"/>
</dbReference>
<dbReference type="PANTHER" id="PTHR38464:SF1">
    <property type="entry name" value="L-ARABINOSE ISOMERASE"/>
    <property type="match status" value="1"/>
</dbReference>
<dbReference type="Pfam" id="PF24856">
    <property type="entry name" value="AraA_central"/>
    <property type="match status" value="1"/>
</dbReference>
<dbReference type="Pfam" id="PF02610">
    <property type="entry name" value="AraA_N"/>
    <property type="match status" value="1"/>
</dbReference>
<dbReference type="Pfam" id="PF11762">
    <property type="entry name" value="Arabinose_Iso_C"/>
    <property type="match status" value="1"/>
</dbReference>
<dbReference type="PIRSF" id="PIRSF001478">
    <property type="entry name" value="L-ara_isomerase"/>
    <property type="match status" value="1"/>
</dbReference>
<dbReference type="SUPFAM" id="SSF50443">
    <property type="entry name" value="FucI/AraA C-terminal domain-like"/>
    <property type="match status" value="1"/>
</dbReference>
<dbReference type="SUPFAM" id="SSF53743">
    <property type="entry name" value="FucI/AraA N-terminal and middle domains"/>
    <property type="match status" value="1"/>
</dbReference>
<gene>
    <name evidence="1" type="primary">araA</name>
    <name type="ordered locus">Shewmr7_1995</name>
</gene>
<reference key="1">
    <citation type="submission" date="2006-08" db="EMBL/GenBank/DDBJ databases">
        <title>Complete sequence of chromosome 1 of Shewanella sp. MR-7.</title>
        <authorList>
            <person name="Copeland A."/>
            <person name="Lucas S."/>
            <person name="Lapidus A."/>
            <person name="Barry K."/>
            <person name="Detter J.C."/>
            <person name="Glavina del Rio T."/>
            <person name="Hammon N."/>
            <person name="Israni S."/>
            <person name="Dalin E."/>
            <person name="Tice H."/>
            <person name="Pitluck S."/>
            <person name="Kiss H."/>
            <person name="Brettin T."/>
            <person name="Bruce D."/>
            <person name="Han C."/>
            <person name="Tapia R."/>
            <person name="Gilna P."/>
            <person name="Schmutz J."/>
            <person name="Larimer F."/>
            <person name="Land M."/>
            <person name="Hauser L."/>
            <person name="Kyrpides N."/>
            <person name="Mikhailova N."/>
            <person name="Nealson K."/>
            <person name="Konstantinidis K."/>
            <person name="Klappenbach J."/>
            <person name="Tiedje J."/>
            <person name="Richardson P."/>
        </authorList>
    </citation>
    <scope>NUCLEOTIDE SEQUENCE [LARGE SCALE GENOMIC DNA]</scope>
    <source>
        <strain>MR-7</strain>
    </source>
</reference>
<accession>Q0HV71</accession>
<comment type="function">
    <text evidence="1">Catalyzes the conversion of L-arabinose to L-ribulose.</text>
</comment>
<comment type="catalytic activity">
    <reaction evidence="1">
        <text>beta-L-arabinopyranose = L-ribulose</text>
        <dbReference type="Rhea" id="RHEA:14821"/>
        <dbReference type="ChEBI" id="CHEBI:16880"/>
        <dbReference type="ChEBI" id="CHEBI:40886"/>
        <dbReference type="EC" id="5.3.1.4"/>
    </reaction>
</comment>
<comment type="cofactor">
    <cofactor evidence="1">
        <name>Mn(2+)</name>
        <dbReference type="ChEBI" id="CHEBI:29035"/>
    </cofactor>
    <text evidence="1">Binds 1 Mn(2+) ion per subunit.</text>
</comment>
<comment type="pathway">
    <text evidence="1">Carbohydrate degradation; L-arabinose degradation via L-ribulose; D-xylulose 5-phosphate from L-arabinose (bacterial route): step 1/3.</text>
</comment>
<comment type="similarity">
    <text evidence="1">Belongs to the arabinose isomerase family.</text>
</comment>
<protein>
    <recommendedName>
        <fullName evidence="1">L-arabinose isomerase</fullName>
        <ecNumber evidence="1">5.3.1.4</ecNumber>
    </recommendedName>
</protein>
<organism>
    <name type="scientific">Shewanella sp. (strain MR-7)</name>
    <dbReference type="NCBI Taxonomy" id="60481"/>
    <lineage>
        <taxon>Bacteria</taxon>
        <taxon>Pseudomonadati</taxon>
        <taxon>Pseudomonadota</taxon>
        <taxon>Gammaproteobacteria</taxon>
        <taxon>Alteromonadales</taxon>
        <taxon>Shewanellaceae</taxon>
        <taxon>Shewanella</taxon>
    </lineage>
</organism>